<sequence>MATPNQEAIDTFISITGASDAVALQKLEEHRGDLNQAVNAYFSEGDRNVVREAPVNDDDEMDIDDVIPAPQSPLSMFNAARTIGRPPFSLLDSDFARRVFDSDPLMPRPPFVSHPREVRQIPIEVKDSSGPSGRSSDAPTIEDVTETAHVQGPVTTQGTVIIDEESDDDIPFAPMGRSRQDRPAGSVANNNNQDYNDIEEEMIRAAIEASKKEAEGSSNPLLEERPLHMEDDDDIAIAVTMSLKSAEEEVLRSQGYKASTSEIGASAVTAAQGPQDTQALNGRLAAPSSPFDDDSDDVDEQPLVRHRPRRAASGSLAPPNADRSRSGSPEEEHASINPAERGSGFPSEWGGISSEEHDEAVMLEAAMFGGIPETGYNHLPFLPPQPRAQPRPPSPSLTAQRLIREQQDDEYVASLQADRDKEMKSIRDAEARQLEEETARKAFLEEEKKKEEEAQRKLEEEQELERQLDAKEASLPKEPQADEENAITLLIRMPDGTRRGRRFLKSDKLQTLFNFIDIARVVKPNTYRLVRPYPRHAFGDGESESTLNDLGLTSKQEALFLELI</sequence>
<protein>
    <recommendedName>
        <fullName evidence="7">Plant UBX domain-containing protein 8</fullName>
        <shortName evidence="7">PUX8</shortName>
    </recommendedName>
    <alternativeName>
        <fullName evidence="10">Ara4-interacting protein</fullName>
    </alternativeName>
    <alternativeName>
        <fullName evidence="6">Suppressor of ARA4-induced defect of ypt1</fullName>
        <shortName evidence="6">SAY1</shortName>
    </alternativeName>
</protein>
<reference key="1">
    <citation type="journal article" date="2000" name="Plant J.">
        <title>Modes of interaction between the Arabidopsis Rab protein, Ara4, and its putative regulator molecules revealed by a yeast expression system.</title>
        <authorList>
            <person name="Ueda T."/>
            <person name="Matsuda N."/>
            <person name="Uchimiya H."/>
            <person name="Nakano A."/>
        </authorList>
    </citation>
    <scope>NUCLEOTIDE SEQUENCE [MRNA] (ISOFORM 2)</scope>
    <scope>INTERACTION WITH RABA5C</scope>
</reference>
<reference key="2">
    <citation type="journal article" date="1999" name="Nature">
        <title>Sequence and analysis of chromosome 4 of the plant Arabidopsis thaliana.</title>
        <authorList>
            <person name="Mayer K.F.X."/>
            <person name="Schueller C."/>
            <person name="Wambutt R."/>
            <person name="Murphy G."/>
            <person name="Volckaert G."/>
            <person name="Pohl T."/>
            <person name="Duesterhoeft A."/>
            <person name="Stiekema W."/>
            <person name="Entian K.-D."/>
            <person name="Terryn N."/>
            <person name="Harris B."/>
            <person name="Ansorge W."/>
            <person name="Brandt P."/>
            <person name="Grivell L.A."/>
            <person name="Rieger M."/>
            <person name="Weichselgartner M."/>
            <person name="de Simone V."/>
            <person name="Obermaier B."/>
            <person name="Mache R."/>
            <person name="Mueller M."/>
            <person name="Kreis M."/>
            <person name="Delseny M."/>
            <person name="Puigdomenech P."/>
            <person name="Watson M."/>
            <person name="Schmidtheini T."/>
            <person name="Reichert B."/>
            <person name="Portetelle D."/>
            <person name="Perez-Alonso M."/>
            <person name="Boutry M."/>
            <person name="Bancroft I."/>
            <person name="Vos P."/>
            <person name="Hoheisel J."/>
            <person name="Zimmermann W."/>
            <person name="Wedler H."/>
            <person name="Ridley P."/>
            <person name="Langham S.-A."/>
            <person name="McCullagh B."/>
            <person name="Bilham L."/>
            <person name="Robben J."/>
            <person name="van der Schueren J."/>
            <person name="Grymonprez B."/>
            <person name="Chuang Y.-J."/>
            <person name="Vandenbussche F."/>
            <person name="Braeken M."/>
            <person name="Weltjens I."/>
            <person name="Voet M."/>
            <person name="Bastiaens I."/>
            <person name="Aert R."/>
            <person name="Defoor E."/>
            <person name="Weitzenegger T."/>
            <person name="Bothe G."/>
            <person name="Ramsperger U."/>
            <person name="Hilbert H."/>
            <person name="Braun M."/>
            <person name="Holzer E."/>
            <person name="Brandt A."/>
            <person name="Peters S."/>
            <person name="van Staveren M."/>
            <person name="Dirkse W."/>
            <person name="Mooijman P."/>
            <person name="Klein Lankhorst R."/>
            <person name="Rose M."/>
            <person name="Hauf J."/>
            <person name="Koetter P."/>
            <person name="Berneiser S."/>
            <person name="Hempel S."/>
            <person name="Feldpausch M."/>
            <person name="Lamberth S."/>
            <person name="Van den Daele H."/>
            <person name="De Keyser A."/>
            <person name="Buysshaert C."/>
            <person name="Gielen J."/>
            <person name="Villarroel R."/>
            <person name="De Clercq R."/>
            <person name="van Montagu M."/>
            <person name="Rogers J."/>
            <person name="Cronin A."/>
            <person name="Quail M.A."/>
            <person name="Bray-Allen S."/>
            <person name="Clark L."/>
            <person name="Doggett J."/>
            <person name="Hall S."/>
            <person name="Kay M."/>
            <person name="Lennard N."/>
            <person name="McLay K."/>
            <person name="Mayes R."/>
            <person name="Pettett A."/>
            <person name="Rajandream M.A."/>
            <person name="Lyne M."/>
            <person name="Benes V."/>
            <person name="Rechmann S."/>
            <person name="Borkova D."/>
            <person name="Bloecker H."/>
            <person name="Scharfe M."/>
            <person name="Grimm M."/>
            <person name="Loehnert T.-H."/>
            <person name="Dose S."/>
            <person name="de Haan M."/>
            <person name="Maarse A.C."/>
            <person name="Schaefer M."/>
            <person name="Mueller-Auer S."/>
            <person name="Gabel C."/>
            <person name="Fuchs M."/>
            <person name="Fartmann B."/>
            <person name="Granderath K."/>
            <person name="Dauner D."/>
            <person name="Herzl A."/>
            <person name="Neumann S."/>
            <person name="Argiriou A."/>
            <person name="Vitale D."/>
            <person name="Liguori R."/>
            <person name="Piravandi E."/>
            <person name="Massenet O."/>
            <person name="Quigley F."/>
            <person name="Clabauld G."/>
            <person name="Muendlein A."/>
            <person name="Felber R."/>
            <person name="Schnabl S."/>
            <person name="Hiller R."/>
            <person name="Schmidt W."/>
            <person name="Lecharny A."/>
            <person name="Aubourg S."/>
            <person name="Chefdor F."/>
            <person name="Cooke R."/>
            <person name="Berger C."/>
            <person name="Monfort A."/>
            <person name="Casacuberta E."/>
            <person name="Gibbons T."/>
            <person name="Weber N."/>
            <person name="Vandenbol M."/>
            <person name="Bargues M."/>
            <person name="Terol J."/>
            <person name="Torres A."/>
            <person name="Perez-Perez A."/>
            <person name="Purnelle B."/>
            <person name="Bent E."/>
            <person name="Johnson S."/>
            <person name="Tacon D."/>
            <person name="Jesse T."/>
            <person name="Heijnen L."/>
            <person name="Schwarz S."/>
            <person name="Scholler P."/>
            <person name="Heber S."/>
            <person name="Francs P."/>
            <person name="Bielke C."/>
            <person name="Frishman D."/>
            <person name="Haase D."/>
            <person name="Lemcke K."/>
            <person name="Mewes H.-W."/>
            <person name="Stocker S."/>
            <person name="Zaccaria P."/>
            <person name="Bevan M."/>
            <person name="Wilson R.K."/>
            <person name="de la Bastide M."/>
            <person name="Habermann K."/>
            <person name="Parnell L."/>
            <person name="Dedhia N."/>
            <person name="Gnoj L."/>
            <person name="Schutz K."/>
            <person name="Huang E."/>
            <person name="Spiegel L."/>
            <person name="Sekhon M."/>
            <person name="Murray J."/>
            <person name="Sheet P."/>
            <person name="Cordes M."/>
            <person name="Abu-Threideh J."/>
            <person name="Stoneking T."/>
            <person name="Kalicki J."/>
            <person name="Graves T."/>
            <person name="Harmon G."/>
            <person name="Edwards J."/>
            <person name="Latreille P."/>
            <person name="Courtney L."/>
            <person name="Cloud J."/>
            <person name="Abbott A."/>
            <person name="Scott K."/>
            <person name="Johnson D."/>
            <person name="Minx P."/>
            <person name="Bentley D."/>
            <person name="Fulton B."/>
            <person name="Miller N."/>
            <person name="Greco T."/>
            <person name="Kemp K."/>
            <person name="Kramer J."/>
            <person name="Fulton L."/>
            <person name="Mardis E."/>
            <person name="Dante M."/>
            <person name="Pepin K."/>
            <person name="Hillier L.W."/>
            <person name="Nelson J."/>
            <person name="Spieth J."/>
            <person name="Ryan E."/>
            <person name="Andrews S."/>
            <person name="Geisel C."/>
            <person name="Layman D."/>
            <person name="Du H."/>
            <person name="Ali J."/>
            <person name="Berghoff A."/>
            <person name="Jones K."/>
            <person name="Drone K."/>
            <person name="Cotton M."/>
            <person name="Joshu C."/>
            <person name="Antonoiu B."/>
            <person name="Zidanic M."/>
            <person name="Strong C."/>
            <person name="Sun H."/>
            <person name="Lamar B."/>
            <person name="Yordan C."/>
            <person name="Ma P."/>
            <person name="Zhong J."/>
            <person name="Preston R."/>
            <person name="Vil D."/>
            <person name="Shekher M."/>
            <person name="Matero A."/>
            <person name="Shah R."/>
            <person name="Swaby I.K."/>
            <person name="O'Shaughnessy A."/>
            <person name="Rodriguez M."/>
            <person name="Hoffman J."/>
            <person name="Till S."/>
            <person name="Granat S."/>
            <person name="Shohdy N."/>
            <person name="Hasegawa A."/>
            <person name="Hameed A."/>
            <person name="Lodhi M."/>
            <person name="Johnson A."/>
            <person name="Chen E."/>
            <person name="Marra M.A."/>
            <person name="Martienssen R."/>
            <person name="McCombie W.R."/>
        </authorList>
    </citation>
    <scope>NUCLEOTIDE SEQUENCE [LARGE SCALE GENOMIC DNA]</scope>
    <source>
        <strain>cv. Columbia</strain>
    </source>
</reference>
<reference key="3">
    <citation type="journal article" date="2017" name="Plant J.">
        <title>Araport11: a complete reannotation of the Arabidopsis thaliana reference genome.</title>
        <authorList>
            <person name="Cheng C.Y."/>
            <person name="Krishnakumar V."/>
            <person name="Chan A.P."/>
            <person name="Thibaud-Nissen F."/>
            <person name="Schobel S."/>
            <person name="Town C.D."/>
        </authorList>
    </citation>
    <scope>GENOME REANNOTATION</scope>
    <source>
        <strain>cv. Columbia</strain>
    </source>
</reference>
<reference key="4">
    <citation type="journal article" date="2003" name="Science">
        <title>Empirical analysis of transcriptional activity in the Arabidopsis genome.</title>
        <authorList>
            <person name="Yamada K."/>
            <person name="Lim J."/>
            <person name="Dale J.M."/>
            <person name="Chen H."/>
            <person name="Shinn P."/>
            <person name="Palm C.J."/>
            <person name="Southwick A.M."/>
            <person name="Wu H.C."/>
            <person name="Kim C.J."/>
            <person name="Nguyen M."/>
            <person name="Pham P.K."/>
            <person name="Cheuk R.F."/>
            <person name="Karlin-Newmann G."/>
            <person name="Liu S.X."/>
            <person name="Lam B."/>
            <person name="Sakano H."/>
            <person name="Wu T."/>
            <person name="Yu G."/>
            <person name="Miranda M."/>
            <person name="Quach H.L."/>
            <person name="Tripp M."/>
            <person name="Chang C.H."/>
            <person name="Lee J.M."/>
            <person name="Toriumi M.J."/>
            <person name="Chan M.M."/>
            <person name="Tang C.C."/>
            <person name="Onodera C.S."/>
            <person name="Deng J.M."/>
            <person name="Akiyama K."/>
            <person name="Ansari Y."/>
            <person name="Arakawa T."/>
            <person name="Banh J."/>
            <person name="Banno F."/>
            <person name="Bowser L."/>
            <person name="Brooks S.Y."/>
            <person name="Carninci P."/>
            <person name="Chao Q."/>
            <person name="Choy N."/>
            <person name="Enju A."/>
            <person name="Goldsmith A.D."/>
            <person name="Gurjal M."/>
            <person name="Hansen N.F."/>
            <person name="Hayashizaki Y."/>
            <person name="Johnson-Hopson C."/>
            <person name="Hsuan V.W."/>
            <person name="Iida K."/>
            <person name="Karnes M."/>
            <person name="Khan S."/>
            <person name="Koesema E."/>
            <person name="Ishida J."/>
            <person name="Jiang P.X."/>
            <person name="Jones T."/>
            <person name="Kawai J."/>
            <person name="Kamiya A."/>
            <person name="Meyers C."/>
            <person name="Nakajima M."/>
            <person name="Narusaka M."/>
            <person name="Seki M."/>
            <person name="Sakurai T."/>
            <person name="Satou M."/>
            <person name="Tamse R."/>
            <person name="Vaysberg M."/>
            <person name="Wallender E.K."/>
            <person name="Wong C."/>
            <person name="Yamamura Y."/>
            <person name="Yuan S."/>
            <person name="Shinozaki K."/>
            <person name="Davis R.W."/>
            <person name="Theologis A."/>
            <person name="Ecker J.R."/>
        </authorList>
    </citation>
    <scope>NUCLEOTIDE SEQUENCE [LARGE SCALE MRNA] OF 125-564 (ISOFORM 1)</scope>
    <source>
        <strain>cv. Columbia</strain>
    </source>
</reference>
<reference key="5">
    <citation type="book" date="2005" name="Proceedings of the 16th international conference on Arabidopsis research">
        <title>The plant UBX-domain containing (PUX) protein family regulates the function of Arabidopsis CDC48, a conserved essential AAA-ATPase.</title>
        <authorList>
            <person name="Posthuma R."/>
            <person name="Rancour D."/>
            <person name="Park S."/>
            <person name="Bates B."/>
            <person name="Bednarek S."/>
        </authorList>
    </citation>
    <scope>GENE FAMILY</scope>
</reference>
<reference key="6">
    <citation type="journal article" date="2008" name="J. Proteome Res.">
        <title>Site-specific phosphorylation profiling of Arabidopsis proteins by mass spectrometry and peptide chip analysis.</title>
        <authorList>
            <person name="de la Fuente van Bentem S."/>
            <person name="Anrather D."/>
            <person name="Dohnal I."/>
            <person name="Roitinger E."/>
            <person name="Csaszar E."/>
            <person name="Joore J."/>
            <person name="Buijnink J."/>
            <person name="Carreri A."/>
            <person name="Forzani C."/>
            <person name="Lorkovic Z.J."/>
            <person name="Barta A."/>
            <person name="Lecourieux D."/>
            <person name="Verhounig A."/>
            <person name="Jonak C."/>
            <person name="Hirt H."/>
        </authorList>
    </citation>
    <scope>PHOSPHORYLATION [LARGE SCALE ANALYSIS] AT SER-295; SER-326 AND SER-328</scope>
    <scope>IDENTIFICATION BY MASS SPECTROMETRY [LARGE SCALE ANALYSIS]</scope>
    <source>
        <tissue>Root</tissue>
    </source>
</reference>
<reference key="7">
    <citation type="journal article" date="2009" name="J. Proteomics">
        <title>Phosphoproteomic analysis of nuclei-enriched fractions from Arabidopsis thaliana.</title>
        <authorList>
            <person name="Jones A.M.E."/>
            <person name="MacLean D."/>
            <person name="Studholme D.J."/>
            <person name="Serna-Sanz A."/>
            <person name="Andreasson E."/>
            <person name="Rathjen J.P."/>
            <person name="Peck S.C."/>
        </authorList>
    </citation>
    <scope>PHOSPHORYLATION [LARGE SCALE ANALYSIS] AT SER-295</scope>
    <scope>IDENTIFICATION BY MASS SPECTROMETRY [LARGE SCALE ANALYSIS]</scope>
    <source>
        <strain>cv. Columbia</strain>
    </source>
</reference>
<reference key="8">
    <citation type="journal article" date="2009" name="Plant Physiol.">
        <title>Large-scale Arabidopsis phosphoproteome profiling reveals novel chloroplast kinase substrates and phosphorylation networks.</title>
        <authorList>
            <person name="Reiland S."/>
            <person name="Messerli G."/>
            <person name="Baerenfaller K."/>
            <person name="Gerrits B."/>
            <person name="Endler A."/>
            <person name="Grossmann J."/>
            <person name="Gruissem W."/>
            <person name="Baginsky S."/>
        </authorList>
    </citation>
    <scope>PHOSPHORYLATION [LARGE SCALE ANALYSIS] AT SER-295; SER-324; SER-326 AND SER-328</scope>
    <scope>IDENTIFICATION BY MASS SPECTROMETRY [LARGE SCALE ANALYSIS]</scope>
</reference>
<reference key="9">
    <citation type="journal article" date="2012" name="Mol. Cell. Proteomics">
        <title>Comparative large-scale characterisation of plant vs. mammal proteins reveals similar and idiosyncratic N-alpha acetylation features.</title>
        <authorList>
            <person name="Bienvenut W.V."/>
            <person name="Sumpton D."/>
            <person name="Martinez A."/>
            <person name="Lilla S."/>
            <person name="Espagne C."/>
            <person name="Meinnel T."/>
            <person name="Giglione C."/>
        </authorList>
    </citation>
    <scope>ACETYLATION [LARGE SCALE ANALYSIS] AT ALA-2</scope>
    <scope>CLEAVAGE OF INITIATOR METHIONINE [LARGE SCALE ANALYSIS]</scope>
    <scope>IDENTIFICATION BY MASS SPECTROMETRY [LARGE SCALE ANALYSIS]</scope>
</reference>
<proteinExistence type="evidence at protein level"/>
<comment type="subunit">
    <text evidence="5">Interacts with RABA5C/ARA-4.</text>
</comment>
<comment type="alternative products">
    <event type="alternative splicing"/>
    <isoform>
        <id>F4JPR7-1</id>
        <name>1</name>
        <sequence type="displayed"/>
    </isoform>
    <isoform>
        <id>F4JPR7-2</id>
        <name>2</name>
        <sequence type="described" ref="VSP_057530 VSP_057531"/>
    </isoform>
</comment>
<comment type="sequence caution" evidence="8">
    <conflict type="erroneous initiation">
        <sequence resource="EMBL-CDS" id="AAK68728"/>
    </conflict>
    <text>Truncated N-terminus.</text>
</comment>
<comment type="sequence caution" evidence="8">
    <conflict type="erroneous gene model prediction">
        <sequence resource="EMBL-CDS" id="CAB39945"/>
    </conflict>
</comment>
<comment type="sequence caution" evidence="8">
    <conflict type="erroneous gene model prediction">
        <sequence resource="EMBL-CDS" id="CAB78217"/>
    </conflict>
</comment>
<organism>
    <name type="scientific">Arabidopsis thaliana</name>
    <name type="common">Mouse-ear cress</name>
    <dbReference type="NCBI Taxonomy" id="3702"/>
    <lineage>
        <taxon>Eukaryota</taxon>
        <taxon>Viridiplantae</taxon>
        <taxon>Streptophyta</taxon>
        <taxon>Embryophyta</taxon>
        <taxon>Tracheophyta</taxon>
        <taxon>Spermatophyta</taxon>
        <taxon>Magnoliopsida</taxon>
        <taxon>eudicotyledons</taxon>
        <taxon>Gunneridae</taxon>
        <taxon>Pentapetalae</taxon>
        <taxon>rosids</taxon>
        <taxon>malvids</taxon>
        <taxon>Brassicales</taxon>
        <taxon>Brassicaceae</taxon>
        <taxon>Camelineae</taxon>
        <taxon>Arabidopsis</taxon>
    </lineage>
</organism>
<gene>
    <name evidence="7" type="primary">PUX8</name>
    <name evidence="10" type="synonym">SAY1</name>
    <name evidence="9" type="ordered locus">At4g11740</name>
    <name evidence="11" type="ORF">T5C23.170</name>
</gene>
<keyword id="KW-0007">Acetylation</keyword>
<keyword id="KW-0025">Alternative splicing</keyword>
<keyword id="KW-0175">Coiled coil</keyword>
<keyword id="KW-0597">Phosphoprotein</keyword>
<keyword id="KW-1185">Reference proteome</keyword>
<keyword id="KW-0677">Repeat</keyword>
<keyword id="KW-0833">Ubl conjugation pathway</keyword>
<accession>F4JPR7</accession>
<accession>Q94B82</accession>
<accession>Q9CB00</accession>
<accession>Q9T0E1</accession>
<evidence type="ECO:0000255" key="1"/>
<evidence type="ECO:0000255" key="2">
    <source>
        <dbReference type="PROSITE-ProRule" id="PRU00213"/>
    </source>
</evidence>
<evidence type="ECO:0000255" key="3">
    <source>
        <dbReference type="PROSITE-ProRule" id="PRU00215"/>
    </source>
</evidence>
<evidence type="ECO:0000256" key="4">
    <source>
        <dbReference type="SAM" id="MobiDB-lite"/>
    </source>
</evidence>
<evidence type="ECO:0000269" key="5">
    <source>
    </source>
</evidence>
<evidence type="ECO:0000303" key="6">
    <source>
    </source>
</evidence>
<evidence type="ECO:0000303" key="7">
    <source ref="5"/>
</evidence>
<evidence type="ECO:0000305" key="8"/>
<evidence type="ECO:0000312" key="9">
    <source>
        <dbReference type="Araport" id="AT4G11740"/>
    </source>
</evidence>
<evidence type="ECO:0000312" key="10">
    <source>
        <dbReference type="EMBL" id="BAB32954.1"/>
    </source>
</evidence>
<evidence type="ECO:0000312" key="11">
    <source>
        <dbReference type="EMBL" id="CAB39945.1"/>
    </source>
</evidence>
<evidence type="ECO:0007744" key="12">
    <source>
    </source>
</evidence>
<evidence type="ECO:0007744" key="13">
    <source>
    </source>
</evidence>
<evidence type="ECO:0007744" key="14">
    <source>
    </source>
</evidence>
<evidence type="ECO:0007744" key="15">
    <source>
    </source>
</evidence>
<name>PUX8_ARATH</name>
<dbReference type="EMBL" id="AB007767">
    <property type="protein sequence ID" value="BAB32954.1"/>
    <property type="molecule type" value="mRNA"/>
</dbReference>
<dbReference type="EMBL" id="AL049500">
    <property type="protein sequence ID" value="CAB39945.1"/>
    <property type="status" value="ALT_SEQ"/>
    <property type="molecule type" value="Genomic_DNA"/>
</dbReference>
<dbReference type="EMBL" id="AL161532">
    <property type="protein sequence ID" value="CAB78217.1"/>
    <property type="status" value="ALT_SEQ"/>
    <property type="molecule type" value="Genomic_DNA"/>
</dbReference>
<dbReference type="EMBL" id="CP002687">
    <property type="protein sequence ID" value="AEE83043.1"/>
    <property type="molecule type" value="Genomic_DNA"/>
</dbReference>
<dbReference type="EMBL" id="AY042788">
    <property type="protein sequence ID" value="AAK68728.1"/>
    <property type="status" value="ALT_INIT"/>
    <property type="molecule type" value="mRNA"/>
</dbReference>
<dbReference type="EMBL" id="AY064650">
    <property type="protein sequence ID" value="AAL47361.1"/>
    <property type="molecule type" value="mRNA"/>
</dbReference>
<dbReference type="PIR" id="T04221">
    <property type="entry name" value="T04221"/>
</dbReference>
<dbReference type="RefSeq" id="NP_567380.2">
    <molecule id="F4JPR7-1"/>
    <property type="nucleotide sequence ID" value="NM_117243.4"/>
</dbReference>
<dbReference type="SMR" id="F4JPR7"/>
<dbReference type="FunCoup" id="F4JPR7">
    <property type="interactions" value="1810"/>
</dbReference>
<dbReference type="STRING" id="3702.F4JPR7"/>
<dbReference type="TCDB" id="3.A.16.1.5">
    <property type="family name" value="the endoplasmic reticular retrotranslocon (er-rt) family"/>
</dbReference>
<dbReference type="GlyGen" id="F4JPR7">
    <property type="glycosylation" value="1 site"/>
</dbReference>
<dbReference type="iPTMnet" id="F4JPR7"/>
<dbReference type="PaxDb" id="3702-AT4G11740.1"/>
<dbReference type="ProteomicsDB" id="224801">
    <molecule id="F4JPR7-1"/>
</dbReference>
<dbReference type="EnsemblPlants" id="AT4G11740.1">
    <molecule id="F4JPR7-1"/>
    <property type="protein sequence ID" value="AT4G11740.1"/>
    <property type="gene ID" value="AT4G11740"/>
</dbReference>
<dbReference type="GeneID" id="826779"/>
<dbReference type="Gramene" id="AT4G11740.1">
    <molecule id="F4JPR7-1"/>
    <property type="protein sequence ID" value="AT4G11740.1"/>
    <property type="gene ID" value="AT4G11740"/>
</dbReference>
<dbReference type="KEGG" id="ath:AT4G11740"/>
<dbReference type="Araport" id="AT4G11740"/>
<dbReference type="TAIR" id="AT4G11740">
    <property type="gene designation" value="SAY1"/>
</dbReference>
<dbReference type="eggNOG" id="KOG1363">
    <property type="taxonomic scope" value="Eukaryota"/>
</dbReference>
<dbReference type="HOGENOM" id="CLU_035367_0_0_1"/>
<dbReference type="InParanoid" id="F4JPR7"/>
<dbReference type="OMA" id="PHITHPR"/>
<dbReference type="PRO" id="PR:F4JPR7"/>
<dbReference type="Proteomes" id="UP000006548">
    <property type="component" value="Chromosome 4"/>
</dbReference>
<dbReference type="ExpressionAtlas" id="F4JPR7">
    <property type="expression patterns" value="baseline and differential"/>
</dbReference>
<dbReference type="GO" id="GO:0005829">
    <property type="term" value="C:cytosol"/>
    <property type="evidence" value="ECO:0007005"/>
    <property type="project" value="TAIR"/>
</dbReference>
<dbReference type="GO" id="GO:0016192">
    <property type="term" value="P:vesicle-mediated transport"/>
    <property type="evidence" value="ECO:0000304"/>
    <property type="project" value="TAIR"/>
</dbReference>
<dbReference type="CDD" id="cd14351">
    <property type="entry name" value="UBA_Ubx1_like"/>
    <property type="match status" value="1"/>
</dbReference>
<dbReference type="CDD" id="cd01767">
    <property type="entry name" value="UBX"/>
    <property type="match status" value="1"/>
</dbReference>
<dbReference type="FunFam" id="1.10.8.10:FF:000096">
    <property type="entry name" value="UBX domain-containing protein"/>
    <property type="match status" value="1"/>
</dbReference>
<dbReference type="Gene3D" id="1.10.8.10">
    <property type="entry name" value="DNA helicase RuvA subunit, C-terminal domain"/>
    <property type="match status" value="1"/>
</dbReference>
<dbReference type="Gene3D" id="3.10.20.90">
    <property type="entry name" value="Phosphatidylinositol 3-kinase Catalytic Subunit, Chain A, domain 1"/>
    <property type="match status" value="1"/>
</dbReference>
<dbReference type="InterPro" id="IPR009060">
    <property type="entry name" value="UBA-like_sf"/>
</dbReference>
<dbReference type="InterPro" id="IPR029071">
    <property type="entry name" value="Ubiquitin-like_domsf"/>
</dbReference>
<dbReference type="InterPro" id="IPR001012">
    <property type="entry name" value="UBX_dom"/>
</dbReference>
<dbReference type="InterPro" id="IPR050730">
    <property type="entry name" value="UBX_domain-protein"/>
</dbReference>
<dbReference type="InterPro" id="IPR003903">
    <property type="entry name" value="UIM_dom"/>
</dbReference>
<dbReference type="PANTHER" id="PTHR23322">
    <property type="entry name" value="FAS-ASSOCIATED PROTEIN"/>
    <property type="match status" value="1"/>
</dbReference>
<dbReference type="PANTHER" id="PTHR23322:SF93">
    <property type="entry name" value="UBX DOMAIN-CONTAINING PROTEIN 8"/>
    <property type="match status" value="1"/>
</dbReference>
<dbReference type="Pfam" id="PF14555">
    <property type="entry name" value="UBA_4"/>
    <property type="match status" value="1"/>
</dbReference>
<dbReference type="Pfam" id="PF00789">
    <property type="entry name" value="UBX"/>
    <property type="match status" value="1"/>
</dbReference>
<dbReference type="SMART" id="SM00166">
    <property type="entry name" value="UBX"/>
    <property type="match status" value="1"/>
</dbReference>
<dbReference type="SMART" id="SM00726">
    <property type="entry name" value="UIM"/>
    <property type="match status" value="2"/>
</dbReference>
<dbReference type="SUPFAM" id="SSF46934">
    <property type="entry name" value="UBA-like"/>
    <property type="match status" value="1"/>
</dbReference>
<dbReference type="SUPFAM" id="SSF54236">
    <property type="entry name" value="Ubiquitin-like"/>
    <property type="match status" value="1"/>
</dbReference>
<dbReference type="PROSITE" id="PS50033">
    <property type="entry name" value="UBX"/>
    <property type="match status" value="1"/>
</dbReference>
<dbReference type="PROSITE" id="PS50330">
    <property type="entry name" value="UIM"/>
    <property type="match status" value="2"/>
</dbReference>
<feature type="initiator methionine" description="Removed" evidence="15">
    <location>
        <position position="1"/>
    </location>
</feature>
<feature type="chain" id="PRO_0000432606" description="Plant UBX domain-containing protein 8">
    <location>
        <begin position="2"/>
        <end position="564"/>
    </location>
</feature>
<feature type="domain" description="UBA-like">
    <location>
        <begin position="2"/>
        <end position="44"/>
    </location>
</feature>
<feature type="domain" description="UIM 1" evidence="2">
    <location>
        <begin position="198"/>
        <end position="217"/>
    </location>
</feature>
<feature type="domain" description="UIM 2" evidence="2">
    <location>
        <begin position="230"/>
        <end position="249"/>
    </location>
</feature>
<feature type="domain" description="UBX" evidence="3">
    <location>
        <begin position="482"/>
        <end position="560"/>
    </location>
</feature>
<feature type="region of interest" description="Disordered" evidence="4">
    <location>
        <begin position="210"/>
        <end position="229"/>
    </location>
</feature>
<feature type="region of interest" description="Disordered" evidence="4">
    <location>
        <begin position="267"/>
        <end position="358"/>
    </location>
</feature>
<feature type="region of interest" description="Disordered" evidence="4">
    <location>
        <begin position="371"/>
        <end position="423"/>
    </location>
</feature>
<feature type="region of interest" description="Disordered" evidence="4">
    <location>
        <begin position="443"/>
        <end position="483"/>
    </location>
</feature>
<feature type="coiled-coil region" evidence="1">
    <location>
        <begin position="412"/>
        <end position="478"/>
    </location>
</feature>
<feature type="compositionally biased region" description="Acidic residues" evidence="4">
    <location>
        <begin position="291"/>
        <end position="300"/>
    </location>
</feature>
<feature type="compositionally biased region" description="Basic and acidic residues" evidence="4">
    <location>
        <begin position="322"/>
        <end position="334"/>
    </location>
</feature>
<feature type="compositionally biased region" description="Pro residues" evidence="4">
    <location>
        <begin position="381"/>
        <end position="395"/>
    </location>
</feature>
<feature type="compositionally biased region" description="Basic and acidic residues" evidence="4">
    <location>
        <begin position="443"/>
        <end position="475"/>
    </location>
</feature>
<feature type="modified residue" description="N-acetylalanine" evidence="15">
    <location>
        <position position="2"/>
    </location>
</feature>
<feature type="modified residue" description="Phosphoserine" evidence="12 13 14">
    <location>
        <position position="295"/>
    </location>
</feature>
<feature type="modified residue" description="Phosphoserine" evidence="14">
    <location>
        <position position="324"/>
    </location>
</feature>
<feature type="modified residue" description="Phosphoserine" evidence="12 14">
    <location>
        <position position="326"/>
    </location>
</feature>
<feature type="modified residue" description="Phosphoserine" evidence="12 14">
    <location>
        <position position="328"/>
    </location>
</feature>
<feature type="splice variant" id="VSP_057530" description="In isoform 2.">
    <original>ELERQ</original>
    <variation>ASASG</variation>
    <location>
        <begin position="463"/>
        <end position="467"/>
    </location>
</feature>
<feature type="splice variant" id="VSP_057531" description="In isoform 2.">
    <location>
        <begin position="468"/>
        <end position="564"/>
    </location>
</feature>